<comment type="function">
    <text evidence="1">This is one of the proteins that bind and probably mediate the attachment of the 5S RNA into the large ribosomal subunit, where it forms part of the central protuberance.</text>
</comment>
<comment type="subunit">
    <text evidence="1">Part of the 50S ribosomal subunit; part of the 5S rRNA/L5/L18/L25 subcomplex. Contacts the 5S and 23S rRNAs.</text>
</comment>
<comment type="similarity">
    <text evidence="1">Belongs to the universal ribosomal protein uL18 family.</text>
</comment>
<keyword id="KW-0687">Ribonucleoprotein</keyword>
<keyword id="KW-0689">Ribosomal protein</keyword>
<keyword id="KW-0694">RNA-binding</keyword>
<keyword id="KW-0699">rRNA-binding</keyword>
<proteinExistence type="inferred from homology"/>
<organism>
    <name type="scientific">Yersinia pseudotuberculosis serotype O:3 (strain YPIII)</name>
    <dbReference type="NCBI Taxonomy" id="502800"/>
    <lineage>
        <taxon>Bacteria</taxon>
        <taxon>Pseudomonadati</taxon>
        <taxon>Pseudomonadota</taxon>
        <taxon>Gammaproteobacteria</taxon>
        <taxon>Enterobacterales</taxon>
        <taxon>Yersiniaceae</taxon>
        <taxon>Yersinia</taxon>
    </lineage>
</organism>
<dbReference type="EMBL" id="CP000950">
    <property type="protein sequence ID" value="ACA66612.1"/>
    <property type="molecule type" value="Genomic_DNA"/>
</dbReference>
<dbReference type="RefSeq" id="WP_002213336.1">
    <property type="nucleotide sequence ID" value="NZ_CP009792.1"/>
</dbReference>
<dbReference type="SMR" id="B1JIX7"/>
<dbReference type="GeneID" id="97454247"/>
<dbReference type="KEGG" id="ypy:YPK_0299"/>
<dbReference type="PATRIC" id="fig|502800.11.peg.906"/>
<dbReference type="GO" id="GO:0022625">
    <property type="term" value="C:cytosolic large ribosomal subunit"/>
    <property type="evidence" value="ECO:0007669"/>
    <property type="project" value="TreeGrafter"/>
</dbReference>
<dbReference type="GO" id="GO:0008097">
    <property type="term" value="F:5S rRNA binding"/>
    <property type="evidence" value="ECO:0007669"/>
    <property type="project" value="TreeGrafter"/>
</dbReference>
<dbReference type="GO" id="GO:0003735">
    <property type="term" value="F:structural constituent of ribosome"/>
    <property type="evidence" value="ECO:0007669"/>
    <property type="project" value="InterPro"/>
</dbReference>
<dbReference type="GO" id="GO:0006412">
    <property type="term" value="P:translation"/>
    <property type="evidence" value="ECO:0007669"/>
    <property type="project" value="UniProtKB-UniRule"/>
</dbReference>
<dbReference type="CDD" id="cd00432">
    <property type="entry name" value="Ribosomal_L18_L5e"/>
    <property type="match status" value="1"/>
</dbReference>
<dbReference type="FunFam" id="3.30.420.100:FF:000001">
    <property type="entry name" value="50S ribosomal protein L18"/>
    <property type="match status" value="1"/>
</dbReference>
<dbReference type="Gene3D" id="3.30.420.100">
    <property type="match status" value="1"/>
</dbReference>
<dbReference type="HAMAP" id="MF_01337_B">
    <property type="entry name" value="Ribosomal_uL18_B"/>
    <property type="match status" value="1"/>
</dbReference>
<dbReference type="InterPro" id="IPR004389">
    <property type="entry name" value="Ribosomal_uL18_bac-type"/>
</dbReference>
<dbReference type="InterPro" id="IPR005484">
    <property type="entry name" value="Ribosomal_uL18_bac/euk"/>
</dbReference>
<dbReference type="NCBIfam" id="TIGR00060">
    <property type="entry name" value="L18_bact"/>
    <property type="match status" value="1"/>
</dbReference>
<dbReference type="PANTHER" id="PTHR12899">
    <property type="entry name" value="39S RIBOSOMAL PROTEIN L18, MITOCHONDRIAL"/>
    <property type="match status" value="1"/>
</dbReference>
<dbReference type="PANTHER" id="PTHR12899:SF3">
    <property type="entry name" value="LARGE RIBOSOMAL SUBUNIT PROTEIN UL18M"/>
    <property type="match status" value="1"/>
</dbReference>
<dbReference type="Pfam" id="PF00861">
    <property type="entry name" value="Ribosomal_L18p"/>
    <property type="match status" value="1"/>
</dbReference>
<dbReference type="SUPFAM" id="SSF53137">
    <property type="entry name" value="Translational machinery components"/>
    <property type="match status" value="1"/>
</dbReference>
<sequence length="117" mass="12811">MDKKAARIRRATRARRKLKELGATRLVVHRTPRHIYAQVIAPNGSEILVAASTVEKAINEQLKYAGNKDAAAAVGKTIAERALEKGITKVSFDRSGFQYHGRVQALADAAREAGLQF</sequence>
<reference key="1">
    <citation type="submission" date="2008-02" db="EMBL/GenBank/DDBJ databases">
        <title>Complete sequence of Yersinia pseudotuberculosis YPIII.</title>
        <authorList>
            <consortium name="US DOE Joint Genome Institute"/>
            <person name="Copeland A."/>
            <person name="Lucas S."/>
            <person name="Lapidus A."/>
            <person name="Glavina del Rio T."/>
            <person name="Dalin E."/>
            <person name="Tice H."/>
            <person name="Bruce D."/>
            <person name="Goodwin L."/>
            <person name="Pitluck S."/>
            <person name="Munk A.C."/>
            <person name="Brettin T."/>
            <person name="Detter J.C."/>
            <person name="Han C."/>
            <person name="Tapia R."/>
            <person name="Schmutz J."/>
            <person name="Larimer F."/>
            <person name="Land M."/>
            <person name="Hauser L."/>
            <person name="Challacombe J.F."/>
            <person name="Green L."/>
            <person name="Lindler L.E."/>
            <person name="Nikolich M.P."/>
            <person name="Richardson P."/>
        </authorList>
    </citation>
    <scope>NUCLEOTIDE SEQUENCE [LARGE SCALE GENOMIC DNA]</scope>
    <source>
        <strain>YPIII</strain>
    </source>
</reference>
<feature type="chain" id="PRO_1000142746" description="Large ribosomal subunit protein uL18">
    <location>
        <begin position="1"/>
        <end position="117"/>
    </location>
</feature>
<gene>
    <name evidence="1" type="primary">rplR</name>
    <name type="ordered locus">YPK_0299</name>
</gene>
<evidence type="ECO:0000255" key="1">
    <source>
        <dbReference type="HAMAP-Rule" id="MF_01337"/>
    </source>
</evidence>
<evidence type="ECO:0000305" key="2"/>
<accession>B1JIX7</accession>
<name>RL18_YERPY</name>
<protein>
    <recommendedName>
        <fullName evidence="1">Large ribosomal subunit protein uL18</fullName>
    </recommendedName>
    <alternativeName>
        <fullName evidence="2">50S ribosomal protein L18</fullName>
    </alternativeName>
</protein>